<name>TIG_CERSK</name>
<keyword id="KW-0131">Cell cycle</keyword>
<keyword id="KW-0132">Cell division</keyword>
<keyword id="KW-0143">Chaperone</keyword>
<keyword id="KW-0963">Cytoplasm</keyword>
<keyword id="KW-0413">Isomerase</keyword>
<keyword id="KW-0697">Rotamase</keyword>
<feature type="chain" id="PRO_1000198172" description="Trigger factor">
    <location>
        <begin position="1"/>
        <end position="444"/>
    </location>
</feature>
<feature type="domain" description="PPIase FKBP-type" evidence="1">
    <location>
        <begin position="166"/>
        <end position="251"/>
    </location>
</feature>
<sequence length="444" mass="49139">MQVTETQKEGLKRAYTITVTAAELDAKVQEKLVEAQPDIEMKGFRKGKVPLAMLKKQFGPRLLGDAMQDAIDGAMRDHLETSGDRPAMQPEVRMVDGETWKEGTDVVVEMKYEALPEIPEIETSKVSLERLVVKADEAAIEEALKNLAESAQNFEDRRKGSKAKDGDQVVIDFKGSVDGELFEGGSAEDYPLVLGSGSFIPGFEEQLVGTKVDDEVTVKVTFPAEYGAKHLAGKEAEFACTVKAVKAPKAAELDDELAKKYGAEDLAALKGQISERLEAEYKGASRAVLKRALLDQLDQMVSFELPSKLVEAEAHQIAHQLWHEEHPEEHGHNHGNIEPTDEHKALAERRVRLGLLLAEIGRKAEVTVTDAEMTQAVLAQARQYPGQERAYFEFVQKNPQIQQQLRAPIFEDKVVDLILEGATVTEKEVGKDDLQKAIEALDEM</sequence>
<dbReference type="EC" id="5.2.1.8" evidence="1"/>
<dbReference type="EMBL" id="CP001150">
    <property type="protein sequence ID" value="ACM01340.1"/>
    <property type="molecule type" value="Genomic_DNA"/>
</dbReference>
<dbReference type="RefSeq" id="WP_015920767.1">
    <property type="nucleotide sequence ID" value="NC_011963.1"/>
</dbReference>
<dbReference type="SMR" id="B9KJP3"/>
<dbReference type="GeneID" id="67446890"/>
<dbReference type="KEGG" id="rsk:RSKD131_1480"/>
<dbReference type="HOGENOM" id="CLU_033058_2_2_5"/>
<dbReference type="GO" id="GO:0005737">
    <property type="term" value="C:cytoplasm"/>
    <property type="evidence" value="ECO:0007669"/>
    <property type="project" value="UniProtKB-SubCell"/>
</dbReference>
<dbReference type="GO" id="GO:0003755">
    <property type="term" value="F:peptidyl-prolyl cis-trans isomerase activity"/>
    <property type="evidence" value="ECO:0007669"/>
    <property type="project" value="UniProtKB-UniRule"/>
</dbReference>
<dbReference type="GO" id="GO:0051301">
    <property type="term" value="P:cell division"/>
    <property type="evidence" value="ECO:0007669"/>
    <property type="project" value="UniProtKB-KW"/>
</dbReference>
<dbReference type="GO" id="GO:0006457">
    <property type="term" value="P:protein folding"/>
    <property type="evidence" value="ECO:0007669"/>
    <property type="project" value="UniProtKB-UniRule"/>
</dbReference>
<dbReference type="GO" id="GO:0015031">
    <property type="term" value="P:protein transport"/>
    <property type="evidence" value="ECO:0007669"/>
    <property type="project" value="UniProtKB-UniRule"/>
</dbReference>
<dbReference type="FunFam" id="3.10.50.40:FF:000001">
    <property type="entry name" value="Trigger factor"/>
    <property type="match status" value="1"/>
</dbReference>
<dbReference type="Gene3D" id="3.10.50.40">
    <property type="match status" value="1"/>
</dbReference>
<dbReference type="Gene3D" id="3.30.70.1050">
    <property type="entry name" value="Trigger factor ribosome-binding domain"/>
    <property type="match status" value="1"/>
</dbReference>
<dbReference type="Gene3D" id="1.10.3120.10">
    <property type="entry name" value="Trigger factor, C-terminal domain"/>
    <property type="match status" value="1"/>
</dbReference>
<dbReference type="HAMAP" id="MF_00303">
    <property type="entry name" value="Trigger_factor_Tig"/>
    <property type="match status" value="1"/>
</dbReference>
<dbReference type="InterPro" id="IPR046357">
    <property type="entry name" value="PPIase_dom_sf"/>
</dbReference>
<dbReference type="InterPro" id="IPR001179">
    <property type="entry name" value="PPIase_FKBP_dom"/>
</dbReference>
<dbReference type="InterPro" id="IPR005215">
    <property type="entry name" value="Trig_fac"/>
</dbReference>
<dbReference type="InterPro" id="IPR008880">
    <property type="entry name" value="Trigger_fac_C"/>
</dbReference>
<dbReference type="InterPro" id="IPR037041">
    <property type="entry name" value="Trigger_fac_C_sf"/>
</dbReference>
<dbReference type="InterPro" id="IPR008881">
    <property type="entry name" value="Trigger_fac_ribosome-bd_bac"/>
</dbReference>
<dbReference type="InterPro" id="IPR036611">
    <property type="entry name" value="Trigger_fac_ribosome-bd_sf"/>
</dbReference>
<dbReference type="InterPro" id="IPR027304">
    <property type="entry name" value="Trigger_fact/SurA_dom_sf"/>
</dbReference>
<dbReference type="NCBIfam" id="TIGR00115">
    <property type="entry name" value="tig"/>
    <property type="match status" value="1"/>
</dbReference>
<dbReference type="Pfam" id="PF00254">
    <property type="entry name" value="FKBP_C"/>
    <property type="match status" value="1"/>
</dbReference>
<dbReference type="Pfam" id="PF05698">
    <property type="entry name" value="Trigger_C"/>
    <property type="match status" value="1"/>
</dbReference>
<dbReference type="Pfam" id="PF05697">
    <property type="entry name" value="Trigger_N"/>
    <property type="match status" value="1"/>
</dbReference>
<dbReference type="PIRSF" id="PIRSF003095">
    <property type="entry name" value="Trigger_factor"/>
    <property type="match status" value="1"/>
</dbReference>
<dbReference type="SUPFAM" id="SSF54534">
    <property type="entry name" value="FKBP-like"/>
    <property type="match status" value="1"/>
</dbReference>
<dbReference type="SUPFAM" id="SSF109998">
    <property type="entry name" value="Triger factor/SurA peptide-binding domain-like"/>
    <property type="match status" value="1"/>
</dbReference>
<dbReference type="SUPFAM" id="SSF102735">
    <property type="entry name" value="Trigger factor ribosome-binding domain"/>
    <property type="match status" value="1"/>
</dbReference>
<dbReference type="PROSITE" id="PS50059">
    <property type="entry name" value="FKBP_PPIASE"/>
    <property type="match status" value="1"/>
</dbReference>
<proteinExistence type="inferred from homology"/>
<organism>
    <name type="scientific">Cereibacter sphaeroides (strain KD131 / KCTC 12085)</name>
    <name type="common">Rhodobacter sphaeroides</name>
    <dbReference type="NCBI Taxonomy" id="557760"/>
    <lineage>
        <taxon>Bacteria</taxon>
        <taxon>Pseudomonadati</taxon>
        <taxon>Pseudomonadota</taxon>
        <taxon>Alphaproteobacteria</taxon>
        <taxon>Rhodobacterales</taxon>
        <taxon>Paracoccaceae</taxon>
        <taxon>Cereibacter</taxon>
    </lineage>
</organism>
<reference key="1">
    <citation type="journal article" date="2009" name="J. Bacteriol.">
        <title>Complete genome sequence of Rhodobacter sphaeroides KD131.</title>
        <authorList>
            <person name="Lim S.-K."/>
            <person name="Kim S.J."/>
            <person name="Cha S.H."/>
            <person name="Oh Y.-K."/>
            <person name="Rhee H.-J."/>
            <person name="Kim M.-S."/>
            <person name="Lee J.K."/>
        </authorList>
    </citation>
    <scope>NUCLEOTIDE SEQUENCE [LARGE SCALE GENOMIC DNA]</scope>
    <source>
        <strain>KD131 / KCTC 12085</strain>
    </source>
</reference>
<gene>
    <name evidence="1" type="primary">tig</name>
    <name type="ordered locus">RSKD131_1480</name>
</gene>
<accession>B9KJP3</accession>
<comment type="function">
    <text evidence="1">Involved in protein export. Acts as a chaperone by maintaining the newly synthesized protein in an open conformation. Functions as a peptidyl-prolyl cis-trans isomerase.</text>
</comment>
<comment type="catalytic activity">
    <reaction evidence="1">
        <text>[protein]-peptidylproline (omega=180) = [protein]-peptidylproline (omega=0)</text>
        <dbReference type="Rhea" id="RHEA:16237"/>
        <dbReference type="Rhea" id="RHEA-COMP:10747"/>
        <dbReference type="Rhea" id="RHEA-COMP:10748"/>
        <dbReference type="ChEBI" id="CHEBI:83833"/>
        <dbReference type="ChEBI" id="CHEBI:83834"/>
        <dbReference type="EC" id="5.2.1.8"/>
    </reaction>
</comment>
<comment type="subcellular location">
    <subcellularLocation>
        <location>Cytoplasm</location>
    </subcellularLocation>
    <text evidence="1">About half TF is bound to the ribosome near the polypeptide exit tunnel while the other half is free in the cytoplasm.</text>
</comment>
<comment type="domain">
    <text evidence="1">Consists of 3 domains; the N-terminus binds the ribosome, the middle domain has PPIase activity, while the C-terminus has intrinsic chaperone activity on its own.</text>
</comment>
<comment type="similarity">
    <text evidence="1">Belongs to the FKBP-type PPIase family. Tig subfamily.</text>
</comment>
<evidence type="ECO:0000255" key="1">
    <source>
        <dbReference type="HAMAP-Rule" id="MF_00303"/>
    </source>
</evidence>
<protein>
    <recommendedName>
        <fullName evidence="1">Trigger factor</fullName>
        <shortName evidence="1">TF</shortName>
        <ecNumber evidence="1">5.2.1.8</ecNumber>
    </recommendedName>
    <alternativeName>
        <fullName evidence="1">PPIase</fullName>
    </alternativeName>
</protein>